<dbReference type="EC" id="1.18.6.1" evidence="1"/>
<dbReference type="EMBL" id="CP001349">
    <property type="protein sequence ID" value="ACL58883.1"/>
    <property type="molecule type" value="Genomic_DNA"/>
</dbReference>
<dbReference type="RefSeq" id="WP_015930533.1">
    <property type="nucleotide sequence ID" value="NC_011894.1"/>
</dbReference>
<dbReference type="SMR" id="B8ITG7"/>
<dbReference type="STRING" id="460265.Mnod_3996"/>
<dbReference type="KEGG" id="mno:Mnod_3996"/>
<dbReference type="eggNOG" id="COG1348">
    <property type="taxonomic scope" value="Bacteria"/>
</dbReference>
<dbReference type="HOGENOM" id="CLU_059373_0_0_5"/>
<dbReference type="OrthoDB" id="9778641at2"/>
<dbReference type="Proteomes" id="UP000008207">
    <property type="component" value="Chromosome"/>
</dbReference>
<dbReference type="GO" id="GO:0051539">
    <property type="term" value="F:4 iron, 4 sulfur cluster binding"/>
    <property type="evidence" value="ECO:0007669"/>
    <property type="project" value="UniProtKB-KW"/>
</dbReference>
<dbReference type="GO" id="GO:0005524">
    <property type="term" value="F:ATP binding"/>
    <property type="evidence" value="ECO:0007669"/>
    <property type="project" value="UniProtKB-UniRule"/>
</dbReference>
<dbReference type="GO" id="GO:0046872">
    <property type="term" value="F:metal ion binding"/>
    <property type="evidence" value="ECO:0007669"/>
    <property type="project" value="UniProtKB-KW"/>
</dbReference>
<dbReference type="GO" id="GO:0016163">
    <property type="term" value="F:nitrogenase activity"/>
    <property type="evidence" value="ECO:0007669"/>
    <property type="project" value="UniProtKB-UniRule"/>
</dbReference>
<dbReference type="GO" id="GO:0009399">
    <property type="term" value="P:nitrogen fixation"/>
    <property type="evidence" value="ECO:0007669"/>
    <property type="project" value="UniProtKB-UniRule"/>
</dbReference>
<dbReference type="CDD" id="cd02040">
    <property type="entry name" value="NifH"/>
    <property type="match status" value="1"/>
</dbReference>
<dbReference type="FunFam" id="3.40.50.300:FF:001379">
    <property type="entry name" value="Nitrogenase iron protein 1"/>
    <property type="match status" value="1"/>
</dbReference>
<dbReference type="Gene3D" id="3.40.50.300">
    <property type="entry name" value="P-loop containing nucleotide triphosphate hydrolases"/>
    <property type="match status" value="1"/>
</dbReference>
<dbReference type="HAMAP" id="MF_00533">
    <property type="entry name" value="NifH"/>
    <property type="match status" value="1"/>
</dbReference>
<dbReference type="InterPro" id="IPR030655">
    <property type="entry name" value="NifH/chlL_CS"/>
</dbReference>
<dbReference type="InterPro" id="IPR000392">
    <property type="entry name" value="NifH/frxC"/>
</dbReference>
<dbReference type="InterPro" id="IPR005977">
    <property type="entry name" value="Nitrogenase_Fe_NifH"/>
</dbReference>
<dbReference type="InterPro" id="IPR027417">
    <property type="entry name" value="P-loop_NTPase"/>
</dbReference>
<dbReference type="NCBIfam" id="TIGR01287">
    <property type="entry name" value="nifH"/>
    <property type="match status" value="1"/>
</dbReference>
<dbReference type="PANTHER" id="PTHR42864">
    <property type="entry name" value="LIGHT-INDEPENDENT PROTOCHLOROPHYLLIDE REDUCTASE IRON-SULFUR ATP-BINDING PROTEIN"/>
    <property type="match status" value="1"/>
</dbReference>
<dbReference type="PANTHER" id="PTHR42864:SF2">
    <property type="entry name" value="LIGHT-INDEPENDENT PROTOCHLOROPHYLLIDE REDUCTASE IRON-SULFUR ATP-BINDING PROTEIN"/>
    <property type="match status" value="1"/>
</dbReference>
<dbReference type="Pfam" id="PF00142">
    <property type="entry name" value="Fer4_NifH"/>
    <property type="match status" value="1"/>
</dbReference>
<dbReference type="PIRSF" id="PIRSF000363">
    <property type="entry name" value="Nitrogenase_iron"/>
    <property type="match status" value="1"/>
</dbReference>
<dbReference type="PRINTS" id="PR00091">
    <property type="entry name" value="NITROGNASEII"/>
</dbReference>
<dbReference type="SUPFAM" id="SSF52540">
    <property type="entry name" value="P-loop containing nucleoside triphosphate hydrolases"/>
    <property type="match status" value="1"/>
</dbReference>
<dbReference type="PROSITE" id="PS00746">
    <property type="entry name" value="NIFH_FRXC_1"/>
    <property type="match status" value="1"/>
</dbReference>
<dbReference type="PROSITE" id="PS00692">
    <property type="entry name" value="NIFH_FRXC_2"/>
    <property type="match status" value="1"/>
</dbReference>
<dbReference type="PROSITE" id="PS51026">
    <property type="entry name" value="NIFH_FRXC_3"/>
    <property type="match status" value="1"/>
</dbReference>
<reference key="1">
    <citation type="submission" date="2009-01" db="EMBL/GenBank/DDBJ databases">
        <title>Complete sequence of chromosome of Methylobacterium nodulans ORS 2060.</title>
        <authorList>
            <consortium name="US DOE Joint Genome Institute"/>
            <person name="Lucas S."/>
            <person name="Copeland A."/>
            <person name="Lapidus A."/>
            <person name="Glavina del Rio T."/>
            <person name="Dalin E."/>
            <person name="Tice H."/>
            <person name="Bruce D."/>
            <person name="Goodwin L."/>
            <person name="Pitluck S."/>
            <person name="Sims D."/>
            <person name="Brettin T."/>
            <person name="Detter J.C."/>
            <person name="Han C."/>
            <person name="Larimer F."/>
            <person name="Land M."/>
            <person name="Hauser L."/>
            <person name="Kyrpides N."/>
            <person name="Ivanova N."/>
            <person name="Marx C.J."/>
            <person name="Richardson P."/>
        </authorList>
    </citation>
    <scope>NUCLEOTIDE SEQUENCE [LARGE SCALE GENOMIC DNA]</scope>
    <source>
        <strain>LMG 21967 / CNCM I-2342 / ORS 2060</strain>
    </source>
</reference>
<accession>B8ITG7</accession>
<keyword id="KW-0004">4Fe-4S</keyword>
<keyword id="KW-0013">ADP-ribosylation</keyword>
<keyword id="KW-0067">ATP-binding</keyword>
<keyword id="KW-0408">Iron</keyword>
<keyword id="KW-0411">Iron-sulfur</keyword>
<keyword id="KW-0479">Metal-binding</keyword>
<keyword id="KW-0535">Nitrogen fixation</keyword>
<keyword id="KW-0547">Nucleotide-binding</keyword>
<keyword id="KW-0560">Oxidoreductase</keyword>
<keyword id="KW-1185">Reference proteome</keyword>
<proteinExistence type="inferred from homology"/>
<protein>
    <recommendedName>
        <fullName evidence="1">Nitrogenase iron protein</fullName>
        <ecNumber evidence="1">1.18.6.1</ecNumber>
    </recommendedName>
    <alternativeName>
        <fullName evidence="1">Nitrogenase Fe protein</fullName>
    </alternativeName>
    <alternativeName>
        <fullName evidence="1">Nitrogenase component II</fullName>
    </alternativeName>
    <alternativeName>
        <fullName evidence="1">Nitrogenase reductase</fullName>
    </alternativeName>
</protein>
<evidence type="ECO:0000255" key="1">
    <source>
        <dbReference type="HAMAP-Rule" id="MF_00533"/>
    </source>
</evidence>
<organism>
    <name type="scientific">Methylobacterium nodulans (strain LMG 21967 / CNCM I-2342 / ORS 2060)</name>
    <dbReference type="NCBI Taxonomy" id="460265"/>
    <lineage>
        <taxon>Bacteria</taxon>
        <taxon>Pseudomonadati</taxon>
        <taxon>Pseudomonadota</taxon>
        <taxon>Alphaproteobacteria</taxon>
        <taxon>Hyphomicrobiales</taxon>
        <taxon>Methylobacteriaceae</taxon>
        <taxon>Methylobacterium</taxon>
    </lineage>
</organism>
<sequence length="299" mass="32115">MTGLRQIAFYGKGGIGKSTTSQNTLAALVEKGQKILIVGCDPKADSTRLILNAKAQDTVLSLAAEAGSVEDLELEEVLKIGYKGIKCVESGGPEPGVGCAGRGVITSINFLEENGAYDDVDYVSYDVLGDVVCGGFAMPIRENKAQEIYIVMSGEMMALYAANNIAKGILKYAHSGGVRLGGLICNERQTDRELDLAEALAKRLNSQLIHFVPRDNIVQHAELRRQTVIQYAPDSAQAGEYRKLAEKVHANAGKGTIPTPITMEELEQMLLDFGIMKTEEQQLAELAAKEAAKAAAALR</sequence>
<comment type="function">
    <text evidence="1">The key enzymatic reactions in nitrogen fixation are catalyzed by the nitrogenase complex, which has 2 components: the iron protein and the molybdenum-iron protein.</text>
</comment>
<comment type="catalytic activity">
    <reaction evidence="1">
        <text>N2 + 8 reduced [2Fe-2S]-[ferredoxin] + 16 ATP + 16 H2O = H2 + 8 oxidized [2Fe-2S]-[ferredoxin] + 2 NH4(+) + 16 ADP + 16 phosphate + 6 H(+)</text>
        <dbReference type="Rhea" id="RHEA:21448"/>
        <dbReference type="Rhea" id="RHEA-COMP:10000"/>
        <dbReference type="Rhea" id="RHEA-COMP:10001"/>
        <dbReference type="ChEBI" id="CHEBI:15377"/>
        <dbReference type="ChEBI" id="CHEBI:15378"/>
        <dbReference type="ChEBI" id="CHEBI:17997"/>
        <dbReference type="ChEBI" id="CHEBI:18276"/>
        <dbReference type="ChEBI" id="CHEBI:28938"/>
        <dbReference type="ChEBI" id="CHEBI:30616"/>
        <dbReference type="ChEBI" id="CHEBI:33737"/>
        <dbReference type="ChEBI" id="CHEBI:33738"/>
        <dbReference type="ChEBI" id="CHEBI:43474"/>
        <dbReference type="ChEBI" id="CHEBI:456216"/>
        <dbReference type="EC" id="1.18.6.1"/>
    </reaction>
</comment>
<comment type="cofactor">
    <cofactor evidence="1">
        <name>[4Fe-4S] cluster</name>
        <dbReference type="ChEBI" id="CHEBI:49883"/>
    </cofactor>
    <text evidence="1">Binds 1 [4Fe-4S] cluster per dimer.</text>
</comment>
<comment type="subunit">
    <text evidence="1">Homodimer.</text>
</comment>
<comment type="PTM">
    <text evidence="1">The reversible ADP-ribosylation of Arg-102 inactivates the nitrogenase reductase and regulates nitrogenase activity.</text>
</comment>
<comment type="similarity">
    <text evidence="1">Belongs to the NifH/BchL/ChlL family.</text>
</comment>
<gene>
    <name evidence="1" type="primary">nifH</name>
    <name type="ordered locus">Mnod_3996</name>
</gene>
<name>NIFH_METNO</name>
<feature type="chain" id="PRO_1000211876" description="Nitrogenase iron protein">
    <location>
        <begin position="1"/>
        <end position="299"/>
    </location>
</feature>
<feature type="binding site" evidence="1">
    <location>
        <begin position="11"/>
        <end position="18"/>
    </location>
    <ligand>
        <name>ATP</name>
        <dbReference type="ChEBI" id="CHEBI:30616"/>
    </ligand>
</feature>
<feature type="binding site" evidence="1">
    <location>
        <position position="99"/>
    </location>
    <ligand>
        <name>[4Fe-4S] cluster</name>
        <dbReference type="ChEBI" id="CHEBI:49883"/>
        <note>ligand shared between dimeric partners</note>
    </ligand>
</feature>
<feature type="binding site" evidence="1">
    <location>
        <position position="133"/>
    </location>
    <ligand>
        <name>[4Fe-4S] cluster</name>
        <dbReference type="ChEBI" id="CHEBI:49883"/>
        <note>ligand shared between dimeric partners</note>
    </ligand>
</feature>
<feature type="modified residue" description="ADP-ribosylarginine; by dinitrogenase reductase ADP-ribosyltransferase" evidence="1">
    <location>
        <position position="102"/>
    </location>
</feature>